<sequence>MSSGNSSTGTHTNGNFATLGSSPPSAVGGKGRAIPPKVTHEDASVELKTMNPERGAARGSIPLGEDIMQIARIGEVPAMQRLFDEKKFSANHKDEEGITPLHWAAINNQYAMCKFLLDSGADVNAKGGESVATPAMWAAQRCHYYIVHLLLQRGADPLLTDVQGYNILHLATIDGNAFLLVLLLHQEIPVDVVDQQGHTGLMWAAYKGYPALVDLFLRWGAHANAVDEGGLTPLHWALVKGSLPCVLKLIEYGADKFAKTRDGKTPAVVAGEMNTTRVWYRALDEYGYDLDGNAKVSSSGLASWVRNKSLMSKFFFLWPFAIVFAAVWILSNMVVYAAIPMMLVTVFGLQWVAQKAASQGPSEYRILQKTPYLSGVFAGSLFWVGFRYVFYVLPVTYSTSPILNGLFAIFFSLTTYFYIYSMVEDPGFVPKLGSRNQQRAVITELFEQWKFDEENFCVSCMVRRPLRSKHCKRCARCVAKHDHHCPWIDNCVGANNLRHFVLYITCLEVGIVLFVQLTFNYINSLPAPAQPQCNIINETLCDFVLRDTFTLVLDLWVCIQLVWITMLVAVQMIQISRNQTTYENMRGHSVDRSYPSSRAFASAVAAGTTSLNAAGLTSSGQGPNPALAQGAPRHRKHGCLQQWSSLLGIDTFFATARDGLRDGPRAVRPKNPFSRGVVTNCRDFWCDPAPYFGKREPGAAMLGGEVINYNRMYETPSRMHSGGGYQSLSVEDPEQGV</sequence>
<accession>Q7Z8U2</accession>
<accession>Q2TZB1</accession>
<feature type="chain" id="PRO_0000212918" description="Palmitoyltransferase akr1">
    <location>
        <begin position="1"/>
        <end position="737"/>
    </location>
</feature>
<feature type="topological domain" description="Cytoplasmic" evidence="2">
    <location>
        <begin position="1"/>
        <end position="313"/>
    </location>
</feature>
<feature type="transmembrane region" description="Helical" evidence="2">
    <location>
        <begin position="314"/>
        <end position="334"/>
    </location>
</feature>
<feature type="transmembrane region" description="Helical" evidence="2">
    <location>
        <begin position="335"/>
        <end position="355"/>
    </location>
</feature>
<feature type="topological domain" description="Cytoplasmic" evidence="2">
    <location>
        <begin position="356"/>
        <end position="374"/>
    </location>
</feature>
<feature type="transmembrane region" description="Helical" evidence="2">
    <location>
        <begin position="375"/>
        <end position="395"/>
    </location>
</feature>
<feature type="topological domain" description="Lumenal" evidence="2">
    <location>
        <begin position="396"/>
        <end position="401"/>
    </location>
</feature>
<feature type="transmembrane region" description="Helical" evidence="2">
    <location>
        <begin position="402"/>
        <end position="422"/>
    </location>
</feature>
<feature type="topological domain" description="Cytoplasmic" evidence="2">
    <location>
        <begin position="423"/>
        <end position="498"/>
    </location>
</feature>
<feature type="transmembrane region" description="Helical" evidence="2">
    <location>
        <begin position="499"/>
        <end position="519"/>
    </location>
</feature>
<feature type="topological domain" description="Lumenal" evidence="2">
    <location>
        <begin position="520"/>
        <end position="548"/>
    </location>
</feature>
<feature type="transmembrane region" description="Helical" evidence="2">
    <location>
        <begin position="549"/>
        <end position="569"/>
    </location>
</feature>
<feature type="topological domain" description="Cytoplasmic" evidence="2">
    <location>
        <begin position="570"/>
        <end position="737"/>
    </location>
</feature>
<feature type="repeat" description="ANK 1">
    <location>
        <begin position="96"/>
        <end position="125"/>
    </location>
</feature>
<feature type="repeat" description="ANK 2">
    <location>
        <begin position="130"/>
        <end position="159"/>
    </location>
</feature>
<feature type="repeat" description="ANK 3">
    <location>
        <begin position="163"/>
        <end position="192"/>
    </location>
</feature>
<feature type="repeat" description="ANK 4">
    <location>
        <begin position="196"/>
        <end position="225"/>
    </location>
</feature>
<feature type="repeat" description="ANK 5">
    <location>
        <begin position="228"/>
        <end position="258"/>
    </location>
</feature>
<feature type="domain" description="DHHC" evidence="3">
    <location>
        <begin position="455"/>
        <end position="505"/>
    </location>
</feature>
<feature type="region of interest" description="Disordered" evidence="4">
    <location>
        <begin position="1"/>
        <end position="39"/>
    </location>
</feature>
<feature type="compositionally biased region" description="Low complexity" evidence="4">
    <location>
        <begin position="1"/>
        <end position="15"/>
    </location>
</feature>
<feature type="active site" description="S-palmitoyl cysteine intermediate" evidence="1">
    <location>
        <position position="485"/>
    </location>
</feature>
<feature type="sequence conflict" description="In Ref. 1; BAC78655." evidence="5" ref="1">
    <original>TPL</original>
    <variation>LP</variation>
    <location>
        <begin position="232"/>
        <end position="234"/>
    </location>
</feature>
<feature type="sequence conflict" description="In Ref. 1; BAC78655." evidence="5" ref="1">
    <original>K</original>
    <variation>N</variation>
    <location>
        <position position="240"/>
    </location>
</feature>
<feature type="sequence conflict" description="In Ref. 1; BAC78655." evidence="5" ref="1">
    <original>S</original>
    <variation>R</variation>
    <location>
        <position position="524"/>
    </location>
</feature>
<keyword id="KW-0012">Acyltransferase</keyword>
<keyword id="KW-0040">ANK repeat</keyword>
<keyword id="KW-0967">Endosome</keyword>
<keyword id="KW-0333">Golgi apparatus</keyword>
<keyword id="KW-0449">Lipoprotein</keyword>
<keyword id="KW-0472">Membrane</keyword>
<keyword id="KW-0564">Palmitate</keyword>
<keyword id="KW-1185">Reference proteome</keyword>
<keyword id="KW-0677">Repeat</keyword>
<keyword id="KW-0808">Transferase</keyword>
<keyword id="KW-0812">Transmembrane</keyword>
<keyword id="KW-1133">Transmembrane helix</keyword>
<comment type="function">
    <text evidence="1">Palmitoyltransferase specific for casein kinase 1.</text>
</comment>
<comment type="catalytic activity">
    <reaction>
        <text>L-cysteinyl-[protein] + hexadecanoyl-CoA = S-hexadecanoyl-L-cysteinyl-[protein] + CoA</text>
        <dbReference type="Rhea" id="RHEA:36683"/>
        <dbReference type="Rhea" id="RHEA-COMP:10131"/>
        <dbReference type="Rhea" id="RHEA-COMP:11032"/>
        <dbReference type="ChEBI" id="CHEBI:29950"/>
        <dbReference type="ChEBI" id="CHEBI:57287"/>
        <dbReference type="ChEBI" id="CHEBI:57379"/>
        <dbReference type="ChEBI" id="CHEBI:74151"/>
        <dbReference type="EC" id="2.3.1.225"/>
    </reaction>
</comment>
<comment type="subcellular location">
    <subcellularLocation>
        <location>Early endosome membrane</location>
        <topology>Multi-pass membrane protein</topology>
    </subcellularLocation>
    <subcellularLocation>
        <location evidence="1">Golgi apparatus membrane</location>
        <topology evidence="1">Multi-pass membrane protein</topology>
    </subcellularLocation>
</comment>
<comment type="domain">
    <text evidence="1">The DHHC domain is required for palmitoyltransferase activity.</text>
</comment>
<comment type="similarity">
    <text evidence="5">Belongs to the DHHC palmitoyltransferase family. AKR/ZDHHC17 subfamily.</text>
</comment>
<protein>
    <recommendedName>
        <fullName>Palmitoyltransferase akr1</fullName>
        <ecNumber>2.3.1.225</ecNumber>
    </recommendedName>
    <alternativeName>
        <fullName>Ankyrin repeat-containing protein akr1</fullName>
    </alternativeName>
</protein>
<dbReference type="EC" id="2.3.1.225"/>
<dbReference type="EMBL" id="AB087621">
    <property type="protein sequence ID" value="BAC78655.1"/>
    <property type="molecule type" value="Genomic_DNA"/>
</dbReference>
<dbReference type="EMBL" id="BA000055">
    <property type="protein sequence ID" value="BAE65354.1"/>
    <property type="molecule type" value="Genomic_DNA"/>
</dbReference>
<dbReference type="SMR" id="Q7Z8U2"/>
<dbReference type="STRING" id="510516.Q7Z8U2"/>
<dbReference type="EnsemblFungi" id="BAE65354">
    <property type="protein sequence ID" value="BAE65354"/>
    <property type="gene ID" value="AO090011000927"/>
</dbReference>
<dbReference type="VEuPathDB" id="FungiDB:AO090011000927"/>
<dbReference type="HOGENOM" id="CLU_012510_1_0_1"/>
<dbReference type="OMA" id="FWVGFRY"/>
<dbReference type="Proteomes" id="UP000006564">
    <property type="component" value="Chromosome 7"/>
</dbReference>
<dbReference type="GO" id="GO:0031901">
    <property type="term" value="C:early endosome membrane"/>
    <property type="evidence" value="ECO:0007669"/>
    <property type="project" value="UniProtKB-SubCell"/>
</dbReference>
<dbReference type="GO" id="GO:0000139">
    <property type="term" value="C:Golgi membrane"/>
    <property type="evidence" value="ECO:0007669"/>
    <property type="project" value="UniProtKB-SubCell"/>
</dbReference>
<dbReference type="GO" id="GO:0019706">
    <property type="term" value="F:protein-cysteine S-palmitoyltransferase activity"/>
    <property type="evidence" value="ECO:0007669"/>
    <property type="project" value="UniProtKB-EC"/>
</dbReference>
<dbReference type="Gene3D" id="1.25.40.20">
    <property type="entry name" value="Ankyrin repeat-containing domain"/>
    <property type="match status" value="1"/>
</dbReference>
<dbReference type="InterPro" id="IPR002110">
    <property type="entry name" value="Ankyrin_rpt"/>
</dbReference>
<dbReference type="InterPro" id="IPR036770">
    <property type="entry name" value="Ankyrin_rpt-contain_sf"/>
</dbReference>
<dbReference type="InterPro" id="IPR001594">
    <property type="entry name" value="Palmitoyltrfase_DHHC"/>
</dbReference>
<dbReference type="PANTHER" id="PTHR24161">
    <property type="entry name" value="ANK_REP_REGION DOMAIN-CONTAINING PROTEIN-RELATED"/>
    <property type="match status" value="1"/>
</dbReference>
<dbReference type="PANTHER" id="PTHR24161:SF85">
    <property type="entry name" value="PALMITOYLTRANSFERASE HIP14"/>
    <property type="match status" value="1"/>
</dbReference>
<dbReference type="Pfam" id="PF12796">
    <property type="entry name" value="Ank_2"/>
    <property type="match status" value="2"/>
</dbReference>
<dbReference type="Pfam" id="PF01529">
    <property type="entry name" value="DHHC"/>
    <property type="match status" value="1"/>
</dbReference>
<dbReference type="SMART" id="SM00248">
    <property type="entry name" value="ANK"/>
    <property type="match status" value="5"/>
</dbReference>
<dbReference type="SUPFAM" id="SSF48403">
    <property type="entry name" value="Ankyrin repeat"/>
    <property type="match status" value="1"/>
</dbReference>
<dbReference type="PROSITE" id="PS50297">
    <property type="entry name" value="ANK_REP_REGION"/>
    <property type="match status" value="1"/>
</dbReference>
<dbReference type="PROSITE" id="PS50088">
    <property type="entry name" value="ANK_REPEAT"/>
    <property type="match status" value="4"/>
</dbReference>
<dbReference type="PROSITE" id="PS50216">
    <property type="entry name" value="DHHC"/>
    <property type="match status" value="1"/>
</dbReference>
<gene>
    <name type="primary">akr1</name>
    <name type="synonym">sidR</name>
    <name type="ORF">AO090011000927</name>
</gene>
<reference key="1">
    <citation type="submission" date="2002-07" db="EMBL/GenBank/DDBJ databases">
        <title>Molecular characterization of the gene (sid2) encoding non-ribosomal peptide synthetase and the clustered genes involved in the ferrichrome biosynthesis of Aspergillus oryzae.</title>
        <authorList>
            <person name="Ishida H."/>
            <person name="Hata Y."/>
            <person name="Kawato A."/>
            <person name="Abe Y."/>
            <person name="Sano M."/>
            <person name="Machida M."/>
        </authorList>
    </citation>
    <scope>NUCLEOTIDE SEQUENCE [GENOMIC DNA]</scope>
</reference>
<reference key="2">
    <citation type="journal article" date="2005" name="Nature">
        <title>Genome sequencing and analysis of Aspergillus oryzae.</title>
        <authorList>
            <person name="Machida M."/>
            <person name="Asai K."/>
            <person name="Sano M."/>
            <person name="Tanaka T."/>
            <person name="Kumagai T."/>
            <person name="Terai G."/>
            <person name="Kusumoto K."/>
            <person name="Arima T."/>
            <person name="Akita O."/>
            <person name="Kashiwagi Y."/>
            <person name="Abe K."/>
            <person name="Gomi K."/>
            <person name="Horiuchi H."/>
            <person name="Kitamoto K."/>
            <person name="Kobayashi T."/>
            <person name="Takeuchi M."/>
            <person name="Denning D.W."/>
            <person name="Galagan J.E."/>
            <person name="Nierman W.C."/>
            <person name="Yu J."/>
            <person name="Archer D.B."/>
            <person name="Bennett J.W."/>
            <person name="Bhatnagar D."/>
            <person name="Cleveland T.E."/>
            <person name="Fedorova N.D."/>
            <person name="Gotoh O."/>
            <person name="Horikawa H."/>
            <person name="Hosoyama A."/>
            <person name="Ichinomiya M."/>
            <person name="Igarashi R."/>
            <person name="Iwashita K."/>
            <person name="Juvvadi P.R."/>
            <person name="Kato M."/>
            <person name="Kato Y."/>
            <person name="Kin T."/>
            <person name="Kokubun A."/>
            <person name="Maeda H."/>
            <person name="Maeyama N."/>
            <person name="Maruyama J."/>
            <person name="Nagasaki H."/>
            <person name="Nakajima T."/>
            <person name="Oda K."/>
            <person name="Okada K."/>
            <person name="Paulsen I."/>
            <person name="Sakamoto K."/>
            <person name="Sawano T."/>
            <person name="Takahashi M."/>
            <person name="Takase K."/>
            <person name="Terabayashi Y."/>
            <person name="Wortman J.R."/>
            <person name="Yamada O."/>
            <person name="Yamagata Y."/>
            <person name="Anazawa H."/>
            <person name="Hata Y."/>
            <person name="Koide Y."/>
            <person name="Komori T."/>
            <person name="Koyama Y."/>
            <person name="Minetoki T."/>
            <person name="Suharnan S."/>
            <person name="Tanaka A."/>
            <person name="Isono K."/>
            <person name="Kuhara S."/>
            <person name="Ogasawara N."/>
            <person name="Kikuchi H."/>
        </authorList>
    </citation>
    <scope>NUCLEOTIDE SEQUENCE [LARGE SCALE GENOMIC DNA]</scope>
    <source>
        <strain>ATCC 42149 / RIB 40</strain>
    </source>
</reference>
<organism>
    <name type="scientific">Aspergillus oryzae (strain ATCC 42149 / RIB 40)</name>
    <name type="common">Yellow koji mold</name>
    <dbReference type="NCBI Taxonomy" id="510516"/>
    <lineage>
        <taxon>Eukaryota</taxon>
        <taxon>Fungi</taxon>
        <taxon>Dikarya</taxon>
        <taxon>Ascomycota</taxon>
        <taxon>Pezizomycotina</taxon>
        <taxon>Eurotiomycetes</taxon>
        <taxon>Eurotiomycetidae</taxon>
        <taxon>Eurotiales</taxon>
        <taxon>Aspergillaceae</taxon>
        <taxon>Aspergillus</taxon>
        <taxon>Aspergillus subgen. Circumdati</taxon>
    </lineage>
</organism>
<evidence type="ECO:0000250" key="1"/>
<evidence type="ECO:0000255" key="2"/>
<evidence type="ECO:0000255" key="3">
    <source>
        <dbReference type="PROSITE-ProRule" id="PRU00067"/>
    </source>
</evidence>
<evidence type="ECO:0000256" key="4">
    <source>
        <dbReference type="SAM" id="MobiDB-lite"/>
    </source>
</evidence>
<evidence type="ECO:0000305" key="5"/>
<name>AKR1_ASPOR</name>
<proteinExistence type="inferred from homology"/>